<organism>
    <name type="scientific">Psychrobacter arcticus (strain DSM 17307 / VKM B-2377 / 273-4)</name>
    <dbReference type="NCBI Taxonomy" id="259536"/>
    <lineage>
        <taxon>Bacteria</taxon>
        <taxon>Pseudomonadati</taxon>
        <taxon>Pseudomonadota</taxon>
        <taxon>Gammaproteobacteria</taxon>
        <taxon>Moraxellales</taxon>
        <taxon>Moraxellaceae</taxon>
        <taxon>Psychrobacter</taxon>
    </lineage>
</organism>
<sequence length="680" mass="73759">MQQSPHSLQSQSLFASAVDSAVPLSNLQQTYAVIPRERPYTPLLDRVDSPADLKAFSTADLIALADELRLFVLYSAGQSGGHFGANLGVIELTIALHYLLDAPQDQIVWDVGHQAYAHKVLTGRRDRLGTIRSKAGLTAFPERAESVYDTFGVGHSSTSISAGLGMSLALRYQGRAQTVACIIGDGAMTGGMAFEAMNDAVQQDADLMVILNDNDMSISCSIGGFSRHLAMLWESGYQVDISDAGEPILCRRPDMQAFDRRKRHKKQRDVPQLEDNLFKAIGFTYFGPFDGHNIPELLRVLSLAKQVKGPVLVHIYTTKGKGFAPAELDPVGYHAIGSLPAEDDAPKIEKAAAKPSLKYSQVFGQFLCDKAVQDNKLLAITPAMEEGSGMIEFARQFPERFFDVAIAEQHAVTLAGGMATQGVKPIVAIYSTFLQRGYDQLIHDVALQNLDVMFAIDRAGLVGEDGATHAGVFDFAFLRCVPNMMIAAPKDENECYHLLNTCYEYQGCTAVRYPRGVGTGATITQPAQTYNIGKAVIESVLGEKDAPKKLALLAFGTMVATAQQAAEMIAKSPLLASSCQLHVVNMRWVKPLDTTLLEQLLLQGVTHIATLEEHTIMGGAGSAVNEYLLNDSAAFKNHRPAICNIGIPDRFVAHGSQSEQWADCGLDVEGVVNQLQQLLS</sequence>
<name>DXS_PSYA2</name>
<protein>
    <recommendedName>
        <fullName evidence="1">1-deoxy-D-xylulose-5-phosphate synthase</fullName>
        <ecNumber evidence="1">2.2.1.7</ecNumber>
    </recommendedName>
    <alternativeName>
        <fullName evidence="1">1-deoxyxylulose-5-phosphate synthase</fullName>
        <shortName evidence="1">DXP synthase</shortName>
        <shortName evidence="1">DXPS</shortName>
    </alternativeName>
</protein>
<reference key="1">
    <citation type="journal article" date="2010" name="Appl. Environ. Microbiol.">
        <title>The genome sequence of Psychrobacter arcticus 273-4, a psychroactive Siberian permafrost bacterium, reveals mechanisms for adaptation to low-temperature growth.</title>
        <authorList>
            <person name="Ayala-del-Rio H.L."/>
            <person name="Chain P.S."/>
            <person name="Grzymski J.J."/>
            <person name="Ponder M.A."/>
            <person name="Ivanova N."/>
            <person name="Bergholz P.W."/>
            <person name="Di Bartolo G."/>
            <person name="Hauser L."/>
            <person name="Land M."/>
            <person name="Bakermans C."/>
            <person name="Rodrigues D."/>
            <person name="Klappenbach J."/>
            <person name="Zarka D."/>
            <person name="Larimer F."/>
            <person name="Richardson P."/>
            <person name="Murray A."/>
            <person name="Thomashow M."/>
            <person name="Tiedje J.M."/>
        </authorList>
    </citation>
    <scope>NUCLEOTIDE SEQUENCE [LARGE SCALE GENOMIC DNA]</scope>
    <source>
        <strain>DSM 17307 / VKM B-2377 / 273-4</strain>
    </source>
</reference>
<proteinExistence type="inferred from homology"/>
<dbReference type="EC" id="2.2.1.7" evidence="1"/>
<dbReference type="EMBL" id="CP000082">
    <property type="protein sequence ID" value="AAZ18094.1"/>
    <property type="molecule type" value="Genomic_DNA"/>
</dbReference>
<dbReference type="RefSeq" id="WP_011279532.1">
    <property type="nucleotide sequence ID" value="NC_007204.1"/>
</dbReference>
<dbReference type="SMR" id="Q4FV64"/>
<dbReference type="STRING" id="259536.Psyc_0221"/>
<dbReference type="KEGG" id="par:Psyc_0221"/>
<dbReference type="eggNOG" id="COG1154">
    <property type="taxonomic scope" value="Bacteria"/>
</dbReference>
<dbReference type="HOGENOM" id="CLU_009227_1_4_6"/>
<dbReference type="OrthoDB" id="9803371at2"/>
<dbReference type="UniPathway" id="UPA00064">
    <property type="reaction ID" value="UER00091"/>
</dbReference>
<dbReference type="Proteomes" id="UP000000546">
    <property type="component" value="Chromosome"/>
</dbReference>
<dbReference type="GO" id="GO:0005829">
    <property type="term" value="C:cytosol"/>
    <property type="evidence" value="ECO:0007669"/>
    <property type="project" value="TreeGrafter"/>
</dbReference>
<dbReference type="GO" id="GO:0008661">
    <property type="term" value="F:1-deoxy-D-xylulose-5-phosphate synthase activity"/>
    <property type="evidence" value="ECO:0007669"/>
    <property type="project" value="UniProtKB-UniRule"/>
</dbReference>
<dbReference type="GO" id="GO:0000287">
    <property type="term" value="F:magnesium ion binding"/>
    <property type="evidence" value="ECO:0007669"/>
    <property type="project" value="UniProtKB-UniRule"/>
</dbReference>
<dbReference type="GO" id="GO:0030976">
    <property type="term" value="F:thiamine pyrophosphate binding"/>
    <property type="evidence" value="ECO:0007669"/>
    <property type="project" value="UniProtKB-UniRule"/>
</dbReference>
<dbReference type="GO" id="GO:0052865">
    <property type="term" value="P:1-deoxy-D-xylulose 5-phosphate biosynthetic process"/>
    <property type="evidence" value="ECO:0007669"/>
    <property type="project" value="UniProtKB-UniPathway"/>
</dbReference>
<dbReference type="GO" id="GO:0019288">
    <property type="term" value="P:isopentenyl diphosphate biosynthetic process, methylerythritol 4-phosphate pathway"/>
    <property type="evidence" value="ECO:0007669"/>
    <property type="project" value="TreeGrafter"/>
</dbReference>
<dbReference type="GO" id="GO:0016114">
    <property type="term" value="P:terpenoid biosynthetic process"/>
    <property type="evidence" value="ECO:0007669"/>
    <property type="project" value="UniProtKB-UniRule"/>
</dbReference>
<dbReference type="GO" id="GO:0009228">
    <property type="term" value="P:thiamine biosynthetic process"/>
    <property type="evidence" value="ECO:0007669"/>
    <property type="project" value="UniProtKB-UniRule"/>
</dbReference>
<dbReference type="CDD" id="cd02007">
    <property type="entry name" value="TPP_DXS"/>
    <property type="match status" value="1"/>
</dbReference>
<dbReference type="CDD" id="cd07033">
    <property type="entry name" value="TPP_PYR_DXS_TK_like"/>
    <property type="match status" value="1"/>
</dbReference>
<dbReference type="FunFam" id="3.40.50.970:FF:000005">
    <property type="entry name" value="1-deoxy-D-xylulose-5-phosphate synthase"/>
    <property type="match status" value="1"/>
</dbReference>
<dbReference type="Gene3D" id="3.40.50.920">
    <property type="match status" value="1"/>
</dbReference>
<dbReference type="Gene3D" id="3.40.50.970">
    <property type="match status" value="2"/>
</dbReference>
<dbReference type="HAMAP" id="MF_00315">
    <property type="entry name" value="DXP_synth"/>
    <property type="match status" value="1"/>
</dbReference>
<dbReference type="InterPro" id="IPR005477">
    <property type="entry name" value="Dxylulose-5-P_synthase"/>
</dbReference>
<dbReference type="InterPro" id="IPR029061">
    <property type="entry name" value="THDP-binding"/>
</dbReference>
<dbReference type="InterPro" id="IPR009014">
    <property type="entry name" value="Transketo_C/PFOR_II"/>
</dbReference>
<dbReference type="InterPro" id="IPR005475">
    <property type="entry name" value="Transketolase-like_Pyr-bd"/>
</dbReference>
<dbReference type="InterPro" id="IPR020826">
    <property type="entry name" value="Transketolase_BS"/>
</dbReference>
<dbReference type="InterPro" id="IPR033248">
    <property type="entry name" value="Transketolase_C"/>
</dbReference>
<dbReference type="NCBIfam" id="TIGR00204">
    <property type="entry name" value="dxs"/>
    <property type="match status" value="1"/>
</dbReference>
<dbReference type="NCBIfam" id="NF003933">
    <property type="entry name" value="PRK05444.2-2"/>
    <property type="match status" value="1"/>
</dbReference>
<dbReference type="PANTHER" id="PTHR43322">
    <property type="entry name" value="1-D-DEOXYXYLULOSE 5-PHOSPHATE SYNTHASE-RELATED"/>
    <property type="match status" value="1"/>
</dbReference>
<dbReference type="PANTHER" id="PTHR43322:SF5">
    <property type="entry name" value="1-DEOXY-D-XYLULOSE-5-PHOSPHATE SYNTHASE, CHLOROPLASTIC"/>
    <property type="match status" value="1"/>
</dbReference>
<dbReference type="Pfam" id="PF13292">
    <property type="entry name" value="DXP_synthase_N"/>
    <property type="match status" value="1"/>
</dbReference>
<dbReference type="Pfam" id="PF02779">
    <property type="entry name" value="Transket_pyr"/>
    <property type="match status" value="1"/>
</dbReference>
<dbReference type="Pfam" id="PF02780">
    <property type="entry name" value="Transketolase_C"/>
    <property type="match status" value="1"/>
</dbReference>
<dbReference type="SMART" id="SM00861">
    <property type="entry name" value="Transket_pyr"/>
    <property type="match status" value="1"/>
</dbReference>
<dbReference type="SUPFAM" id="SSF52518">
    <property type="entry name" value="Thiamin diphosphate-binding fold (THDP-binding)"/>
    <property type="match status" value="2"/>
</dbReference>
<dbReference type="SUPFAM" id="SSF52922">
    <property type="entry name" value="TK C-terminal domain-like"/>
    <property type="match status" value="1"/>
</dbReference>
<dbReference type="PROSITE" id="PS00802">
    <property type="entry name" value="TRANSKETOLASE_2"/>
    <property type="match status" value="1"/>
</dbReference>
<gene>
    <name evidence="1" type="primary">dxs</name>
    <name type="ordered locus">Psyc_0221</name>
</gene>
<accession>Q4FV64</accession>
<comment type="function">
    <text evidence="1">Catalyzes the acyloin condensation reaction between C atoms 2 and 3 of pyruvate and glyceraldehyde 3-phosphate to yield 1-deoxy-D-xylulose-5-phosphate (DXP).</text>
</comment>
<comment type="catalytic activity">
    <reaction evidence="1">
        <text>D-glyceraldehyde 3-phosphate + pyruvate + H(+) = 1-deoxy-D-xylulose 5-phosphate + CO2</text>
        <dbReference type="Rhea" id="RHEA:12605"/>
        <dbReference type="ChEBI" id="CHEBI:15361"/>
        <dbReference type="ChEBI" id="CHEBI:15378"/>
        <dbReference type="ChEBI" id="CHEBI:16526"/>
        <dbReference type="ChEBI" id="CHEBI:57792"/>
        <dbReference type="ChEBI" id="CHEBI:59776"/>
        <dbReference type="EC" id="2.2.1.7"/>
    </reaction>
</comment>
<comment type="cofactor">
    <cofactor evidence="1">
        <name>Mg(2+)</name>
        <dbReference type="ChEBI" id="CHEBI:18420"/>
    </cofactor>
    <text evidence="1">Binds 1 Mg(2+) ion per subunit.</text>
</comment>
<comment type="cofactor">
    <cofactor evidence="1">
        <name>thiamine diphosphate</name>
        <dbReference type="ChEBI" id="CHEBI:58937"/>
    </cofactor>
    <text evidence="1">Binds 1 thiamine pyrophosphate per subunit.</text>
</comment>
<comment type="pathway">
    <text evidence="1">Metabolic intermediate biosynthesis; 1-deoxy-D-xylulose 5-phosphate biosynthesis; 1-deoxy-D-xylulose 5-phosphate from D-glyceraldehyde 3-phosphate and pyruvate: step 1/1.</text>
</comment>
<comment type="subunit">
    <text evidence="1">Homodimer.</text>
</comment>
<comment type="similarity">
    <text evidence="1">Belongs to the transketolase family. DXPS subfamily.</text>
</comment>
<keyword id="KW-0414">Isoprene biosynthesis</keyword>
<keyword id="KW-0460">Magnesium</keyword>
<keyword id="KW-0479">Metal-binding</keyword>
<keyword id="KW-1185">Reference proteome</keyword>
<keyword id="KW-0784">Thiamine biosynthesis</keyword>
<keyword id="KW-0786">Thiamine pyrophosphate</keyword>
<keyword id="KW-0808">Transferase</keyword>
<evidence type="ECO:0000255" key="1">
    <source>
        <dbReference type="HAMAP-Rule" id="MF_00315"/>
    </source>
</evidence>
<feature type="chain" id="PRO_0000256463" description="1-deoxy-D-xylulose-5-phosphate synthase">
    <location>
        <begin position="1"/>
        <end position="680"/>
    </location>
</feature>
<feature type="binding site" evidence="1">
    <location>
        <position position="113"/>
    </location>
    <ligand>
        <name>thiamine diphosphate</name>
        <dbReference type="ChEBI" id="CHEBI:58937"/>
    </ligand>
</feature>
<feature type="binding site" evidence="1">
    <location>
        <begin position="154"/>
        <end position="156"/>
    </location>
    <ligand>
        <name>thiamine diphosphate</name>
        <dbReference type="ChEBI" id="CHEBI:58937"/>
    </ligand>
</feature>
<feature type="binding site" evidence="1">
    <location>
        <position position="185"/>
    </location>
    <ligand>
        <name>Mg(2+)</name>
        <dbReference type="ChEBI" id="CHEBI:18420"/>
    </ligand>
</feature>
<feature type="binding site" evidence="1">
    <location>
        <begin position="186"/>
        <end position="187"/>
    </location>
    <ligand>
        <name>thiamine diphosphate</name>
        <dbReference type="ChEBI" id="CHEBI:58937"/>
    </ligand>
</feature>
<feature type="binding site" evidence="1">
    <location>
        <position position="214"/>
    </location>
    <ligand>
        <name>Mg(2+)</name>
        <dbReference type="ChEBI" id="CHEBI:18420"/>
    </ligand>
</feature>
<feature type="binding site" evidence="1">
    <location>
        <position position="214"/>
    </location>
    <ligand>
        <name>thiamine diphosphate</name>
        <dbReference type="ChEBI" id="CHEBI:58937"/>
    </ligand>
</feature>
<feature type="binding site" evidence="1">
    <location>
        <position position="323"/>
    </location>
    <ligand>
        <name>thiamine diphosphate</name>
        <dbReference type="ChEBI" id="CHEBI:58937"/>
    </ligand>
</feature>
<feature type="binding site" evidence="1">
    <location>
        <position position="408"/>
    </location>
    <ligand>
        <name>thiamine diphosphate</name>
        <dbReference type="ChEBI" id="CHEBI:58937"/>
    </ligand>
</feature>